<proteinExistence type="evidence at protein level"/>
<reference key="1">
    <citation type="journal article" date="2003" name="DNA Res.">
        <title>Prediction of the coding sequences of mouse homologues of KIAA gene: II. The complete nucleotide sequences of 400 mouse KIAA-homologous cDNAs identified by screening of terminal sequences of cDNA clones randomly sampled from size-fractionated libraries.</title>
        <authorList>
            <person name="Okazaki N."/>
            <person name="Kikuno R."/>
            <person name="Ohara R."/>
            <person name="Inamoto S."/>
            <person name="Aizawa H."/>
            <person name="Yuasa S."/>
            <person name="Nakajima D."/>
            <person name="Nagase T."/>
            <person name="Ohara O."/>
            <person name="Koga H."/>
        </authorList>
    </citation>
    <scope>NUCLEOTIDE SEQUENCE [LARGE SCALE MRNA]</scope>
    <source>
        <tissue>Brain</tissue>
    </source>
</reference>
<reference key="2">
    <citation type="journal article" date="2004" name="Genome Res.">
        <title>The status, quality, and expansion of the NIH full-length cDNA project: the Mammalian Gene Collection (MGC).</title>
        <authorList>
            <consortium name="The MGC Project Team"/>
        </authorList>
    </citation>
    <scope>NUCLEOTIDE SEQUENCE [LARGE SCALE MRNA]</scope>
    <source>
        <strain>C57BL/6J</strain>
        <tissue>Brain</tissue>
    </source>
</reference>
<reference key="3">
    <citation type="journal article" date="2010" name="Cell">
        <title>A tissue-specific atlas of mouse protein phosphorylation and expression.</title>
        <authorList>
            <person name="Huttlin E.L."/>
            <person name="Jedrychowski M.P."/>
            <person name="Elias J.E."/>
            <person name="Goswami T."/>
            <person name="Rad R."/>
            <person name="Beausoleil S.A."/>
            <person name="Villen J."/>
            <person name="Haas W."/>
            <person name="Sowa M.E."/>
            <person name="Gygi S.P."/>
        </authorList>
    </citation>
    <scope>IDENTIFICATION BY MASS SPECTROMETRY [LARGE SCALE ANALYSIS]</scope>
    <source>
        <tissue>Brain</tissue>
    </source>
</reference>
<reference key="4">
    <citation type="journal article" date="2010" name="J. Neurosci. Res.">
        <title>Analysis of the expression and function of BRINP family genes during neuronal differentiation in mouse embryonic stem cell-derived neural stem cells.</title>
        <authorList>
            <person name="Terashima M."/>
            <person name="Kobayashi M."/>
            <person name="Motomiya M."/>
            <person name="Inoue N."/>
            <person name="Yoshida T."/>
            <person name="Okano H."/>
            <person name="Iwasaki N."/>
            <person name="Minami A."/>
            <person name="Matsuoka I."/>
        </authorList>
    </citation>
    <scope>FUNCTION</scope>
    <scope>INDUCTION</scope>
    <scope>TISSUE SPECIFICITY</scope>
</reference>
<keyword id="KW-0131">Cell cycle</keyword>
<keyword id="KW-0325">Glycoprotein</keyword>
<keyword id="KW-0338">Growth arrest</keyword>
<keyword id="KW-1185">Reference proteome</keyword>
<keyword id="KW-0964">Secreted</keyword>
<keyword id="KW-0732">Signal</keyword>
<protein>
    <recommendedName>
        <fullName>BMP/retinoic acid-inducible neural-specific protein 2</fullName>
    </recommendedName>
</protein>
<feature type="signal peptide" evidence="1">
    <location>
        <begin position="1"/>
        <end position="33"/>
    </location>
</feature>
<feature type="chain" id="PRO_0000045771" description="BMP/retinoic acid-inducible neural-specific protein 2">
    <location>
        <begin position="34"/>
        <end position="783"/>
    </location>
</feature>
<feature type="domain" description="MACPF">
    <location>
        <begin position="85"/>
        <end position="281"/>
    </location>
</feature>
<feature type="glycosylation site" description="N-linked (GlcNAc...) asparagine" evidence="1">
    <location>
        <position position="185"/>
    </location>
</feature>
<feature type="glycosylation site" description="N-linked (GlcNAc...) asparagine" evidence="1">
    <location>
        <position position="354"/>
    </location>
</feature>
<feature type="glycosylation site" description="N-linked (GlcNAc...) asparagine" evidence="1">
    <location>
        <position position="473"/>
    </location>
</feature>
<feature type="glycosylation site" description="N-linked (GlcNAc...) asparagine" evidence="1">
    <location>
        <position position="579"/>
    </location>
</feature>
<feature type="glycosylation site" description="N-linked (GlcNAc...) asparagine" evidence="1">
    <location>
        <position position="626"/>
    </location>
</feature>
<feature type="glycosylation site" description="N-linked (GlcNAc...) asparagine" evidence="1">
    <location>
        <position position="658"/>
    </location>
</feature>
<feature type="sequence conflict" description="In Ref. 1; BAC65831." evidence="3" ref="1">
    <original>T</original>
    <variation>P</variation>
    <location>
        <position position="183"/>
    </location>
</feature>
<feature type="sequence conflict" description="In Ref. 1; BAC65831." evidence="3" ref="1">
    <original>A</original>
    <variation>T</variation>
    <location>
        <position position="620"/>
    </location>
</feature>
<dbReference type="EMBL" id="AK122549">
    <property type="protein sequence ID" value="BAC65831.1"/>
    <property type="status" value="ALT_INIT"/>
    <property type="molecule type" value="mRNA"/>
</dbReference>
<dbReference type="EMBL" id="BC076572">
    <property type="protein sequence ID" value="AAH76572.1"/>
    <property type="molecule type" value="mRNA"/>
</dbReference>
<dbReference type="CCDS" id="CCDS15401.1"/>
<dbReference type="RefSeq" id="NP_997466.2">
    <property type="nucleotide sequence ID" value="NM_207583.2"/>
</dbReference>
<dbReference type="RefSeq" id="XP_006496899.1">
    <property type="nucleotide sequence ID" value="XM_006496836.2"/>
</dbReference>
<dbReference type="RefSeq" id="XP_006496900.1">
    <property type="nucleotide sequence ID" value="XM_006496837.2"/>
</dbReference>
<dbReference type="FunCoup" id="Q6DFY8">
    <property type="interactions" value="219"/>
</dbReference>
<dbReference type="STRING" id="10090.ENSMUSP00000004133"/>
<dbReference type="GlyConnect" id="2158">
    <property type="glycosylation" value="2 N-Linked glycans (1 site)"/>
</dbReference>
<dbReference type="GlyCosmos" id="Q6DFY8">
    <property type="glycosylation" value="6 sites, 2 glycans"/>
</dbReference>
<dbReference type="GlyGen" id="Q6DFY8">
    <property type="glycosylation" value="7 sites, 5 N-linked glycans (3 sites), 1 O-linked glycan (1 site)"/>
</dbReference>
<dbReference type="iPTMnet" id="Q6DFY8"/>
<dbReference type="PhosphoSitePlus" id="Q6DFY8"/>
<dbReference type="jPOST" id="Q6DFY8"/>
<dbReference type="PaxDb" id="10090-ENSMUSP00000004133"/>
<dbReference type="PeptideAtlas" id="Q6DFY8"/>
<dbReference type="ProteomicsDB" id="265234"/>
<dbReference type="Antibodypedia" id="55637">
    <property type="antibodies" value="31 antibodies from 9 providers"/>
</dbReference>
<dbReference type="DNASU" id="240843"/>
<dbReference type="Ensembl" id="ENSMUST00000004133.11">
    <property type="protein sequence ID" value="ENSMUSP00000004133.9"/>
    <property type="gene ID" value="ENSMUSG00000004031.14"/>
</dbReference>
<dbReference type="GeneID" id="240843"/>
<dbReference type="KEGG" id="mmu:240843"/>
<dbReference type="UCSC" id="uc007ddp.2">
    <property type="organism name" value="mouse"/>
</dbReference>
<dbReference type="AGR" id="MGI:2443333"/>
<dbReference type="CTD" id="57795"/>
<dbReference type="MGI" id="MGI:2443333">
    <property type="gene designation" value="Brinp2"/>
</dbReference>
<dbReference type="VEuPathDB" id="HostDB:ENSMUSG00000004031"/>
<dbReference type="eggNOG" id="ENOG502QQZS">
    <property type="taxonomic scope" value="Eukaryota"/>
</dbReference>
<dbReference type="GeneTree" id="ENSGT00940000160314"/>
<dbReference type="HOGENOM" id="CLU_018347_0_0_1"/>
<dbReference type="InParanoid" id="Q6DFY8"/>
<dbReference type="OMA" id="LSACCRW"/>
<dbReference type="OrthoDB" id="10013872at2759"/>
<dbReference type="PhylomeDB" id="Q6DFY8"/>
<dbReference type="TreeFam" id="TF331600"/>
<dbReference type="BioGRID-ORCS" id="240843">
    <property type="hits" value="2 hits in 78 CRISPR screens"/>
</dbReference>
<dbReference type="ChiTaRS" id="Brinp2">
    <property type="organism name" value="mouse"/>
</dbReference>
<dbReference type="PRO" id="PR:Q6DFY8"/>
<dbReference type="Proteomes" id="UP000000589">
    <property type="component" value="Chromosome 1"/>
</dbReference>
<dbReference type="RNAct" id="Q6DFY8">
    <property type="molecule type" value="protein"/>
</dbReference>
<dbReference type="Bgee" id="ENSMUSG00000004031">
    <property type="expression patterns" value="Expressed in primary visual cortex and 70 other cell types or tissues"/>
</dbReference>
<dbReference type="ExpressionAtlas" id="Q6DFY8">
    <property type="expression patterns" value="baseline and differential"/>
</dbReference>
<dbReference type="GO" id="GO:0030425">
    <property type="term" value="C:dendrite"/>
    <property type="evidence" value="ECO:0007669"/>
    <property type="project" value="Ensembl"/>
</dbReference>
<dbReference type="GO" id="GO:0005576">
    <property type="term" value="C:extracellular region"/>
    <property type="evidence" value="ECO:0007669"/>
    <property type="project" value="UniProtKB-SubCell"/>
</dbReference>
<dbReference type="GO" id="GO:0043025">
    <property type="term" value="C:neuronal cell body"/>
    <property type="evidence" value="ECO:0007669"/>
    <property type="project" value="Ensembl"/>
</dbReference>
<dbReference type="GO" id="GO:0071300">
    <property type="term" value="P:cellular response to retinoic acid"/>
    <property type="evidence" value="ECO:0000314"/>
    <property type="project" value="UniProtKB"/>
</dbReference>
<dbReference type="GO" id="GO:0021953">
    <property type="term" value="P:central nervous system neuron differentiation"/>
    <property type="evidence" value="ECO:0000314"/>
    <property type="project" value="UniProtKB"/>
</dbReference>
<dbReference type="GO" id="GO:0040011">
    <property type="term" value="P:locomotion"/>
    <property type="evidence" value="ECO:0000315"/>
    <property type="project" value="MGI"/>
</dbReference>
<dbReference type="GO" id="GO:0035264">
    <property type="term" value="P:multicellular organism growth"/>
    <property type="evidence" value="ECO:0000315"/>
    <property type="project" value="MGI"/>
</dbReference>
<dbReference type="GO" id="GO:0045930">
    <property type="term" value="P:negative regulation of mitotic cell cycle"/>
    <property type="evidence" value="ECO:0000314"/>
    <property type="project" value="UniProtKB"/>
</dbReference>
<dbReference type="GO" id="GO:0007399">
    <property type="term" value="P:nervous system development"/>
    <property type="evidence" value="ECO:0000315"/>
    <property type="project" value="MGI"/>
</dbReference>
<dbReference type="GO" id="GO:0045666">
    <property type="term" value="P:positive regulation of neuron differentiation"/>
    <property type="evidence" value="ECO:0007669"/>
    <property type="project" value="InterPro"/>
</dbReference>
<dbReference type="InterPro" id="IPR033237">
    <property type="entry name" value="BRINP"/>
</dbReference>
<dbReference type="InterPro" id="IPR020864">
    <property type="entry name" value="MACPF"/>
</dbReference>
<dbReference type="PANTHER" id="PTHR15564:SF8">
    <property type="entry name" value="BMP_RETINOIC ACID-INDUCIBLE NEURAL-SPECIFIC PROTEIN 2"/>
    <property type="match status" value="1"/>
</dbReference>
<dbReference type="PANTHER" id="PTHR15564">
    <property type="entry name" value="MACPF DOMAIN-CONTAINING PROTEIN"/>
    <property type="match status" value="1"/>
</dbReference>
<dbReference type="Pfam" id="PF19052">
    <property type="entry name" value="BRINP"/>
    <property type="match status" value="1"/>
</dbReference>
<dbReference type="Pfam" id="PF25415">
    <property type="entry name" value="EGF_BRNP1-3"/>
    <property type="match status" value="1"/>
</dbReference>
<dbReference type="Pfam" id="PF01823">
    <property type="entry name" value="MACPF"/>
    <property type="match status" value="1"/>
</dbReference>
<dbReference type="SMART" id="SM00457">
    <property type="entry name" value="MACPF"/>
    <property type="match status" value="1"/>
</dbReference>
<sequence>MRWPCSSWFRGLWPEAAPWAVLLALGVPGWVLAVSATVAAVVPEQHVSSAGQAPLDWLLTDRGPFHRAQEYADFMERYRQGFTTRYRIYREFARWKVNNLALERRDFFSLPLPLAPEFVRNIRLLGRRPNLQQVTENLIKKYGTHFLLSATLGGEESLTIFVDKRKLSRKSETTGGIPVVGGTGNSSAVSLETLHQLAASYFIDRESTLRRLHHIQIATGAIKVTETRTGPLGCSNYDNLDSVSSVLVQSPENKVQLLGLQVLLPEHLRERFVAAALSYITCSSEGELVCRENDCWCKCSPTFPECNCPDADIQAMEDSLLQIQDSWATHNRQFEESEEFQTLLKRLPSDRFLNSTAISQYWTMDSNLQHRYQQLGASLKVLLKKMHRIVRRLFNLCKRCHRQPRFRLPKERSLSFWWNRIQSLLYCGESTFPGTFLEQSHSCTCPYDQSSCQGPIPCALGEGPACAHCASDNSTRCGSCNPGYVLAQGLCRPEVAESLENFLGLETDLQDLELKYLLQKRDSRIEVHSIFISNDMRLGSWFDPSWRKRMLLTLKSNKYKPGLVHVMLALSLQICLTKNSTLEPVMAIYVNPFGGSHSESWFMPVNEGNFPDWERTNVDAAAQCQNWTITLGNRWKTFFETVHVYLRSRIKSLDDSSNETIYYEPLEMTDPSKNLGYMKINTLQVFGYSLPFDPDAIRDLILQLDYPYTQGSQDSALLQLIELRDRVNQLSPPGKVRLDLFSCLLRHRLKLANNEVGRIQSSLRAFNSKLPNPVEYETGKLCS</sequence>
<name>BRNP2_MOUSE</name>
<comment type="function">
    <text evidence="2">Inhibits neuronal cell proliferation by negative regulation of the cell cycle transition.</text>
</comment>
<comment type="subcellular location">
    <subcellularLocation>
        <location evidence="3">Secreted</location>
    </subcellularLocation>
</comment>
<comment type="tissue specificity">
    <text evidence="2">Weakly expressed in embryonic stem (ES) cells. Strongly expressed in ES-derived neural stem cells (NSCs).</text>
</comment>
<comment type="induction">
    <text evidence="2">Up-regulated upon differentiation into neuronal cells in the presence of retinoic acid and BDNF. Down-regulated upon differentiation into astroglial cells.</text>
</comment>
<comment type="similarity">
    <text evidence="3">Belongs to the BRINP family.</text>
</comment>
<comment type="sequence caution" evidence="3">
    <conflict type="erroneous initiation">
        <sequence resource="EMBL-CDS" id="BAC65831"/>
    </conflict>
    <text>Extended N-terminus.</text>
</comment>
<accession>Q6DFY8</accession>
<accession>Q80T96</accession>
<gene>
    <name type="primary">Brinp2</name>
    <name type="synonym">Fam5b</name>
    <name type="synonym">Kiaa1747</name>
</gene>
<evidence type="ECO:0000255" key="1"/>
<evidence type="ECO:0000269" key="2">
    <source>
    </source>
</evidence>
<evidence type="ECO:0000305" key="3"/>
<organism>
    <name type="scientific">Mus musculus</name>
    <name type="common">Mouse</name>
    <dbReference type="NCBI Taxonomy" id="10090"/>
    <lineage>
        <taxon>Eukaryota</taxon>
        <taxon>Metazoa</taxon>
        <taxon>Chordata</taxon>
        <taxon>Craniata</taxon>
        <taxon>Vertebrata</taxon>
        <taxon>Euteleostomi</taxon>
        <taxon>Mammalia</taxon>
        <taxon>Eutheria</taxon>
        <taxon>Euarchontoglires</taxon>
        <taxon>Glires</taxon>
        <taxon>Rodentia</taxon>
        <taxon>Myomorpha</taxon>
        <taxon>Muroidea</taxon>
        <taxon>Muridae</taxon>
        <taxon>Murinae</taxon>
        <taxon>Mus</taxon>
        <taxon>Mus</taxon>
    </lineage>
</organism>